<comment type="function">
    <text evidence="1">Required for maturation of urease via the functional incorporation of the urease nickel metallocenter.</text>
</comment>
<comment type="subunit">
    <text evidence="1">UreD, UreF and UreG form a complex that acts as a GTP-hydrolysis-dependent molecular chaperone, activating the urease apoprotein by helping to assemble the nickel containing metallocenter of UreC. The UreE protein probably delivers the nickel.</text>
</comment>
<comment type="subcellular location">
    <subcellularLocation>
        <location evidence="1">Cytoplasm</location>
    </subcellularLocation>
</comment>
<comment type="similarity">
    <text evidence="1">Belongs to the UreD family.</text>
</comment>
<feature type="chain" id="PRO_0000340446" description="Urease accessory protein UreD">
    <location>
        <begin position="1"/>
        <end position="262"/>
    </location>
</feature>
<protein>
    <recommendedName>
        <fullName evidence="1">Urease accessory protein UreD</fullName>
    </recommendedName>
</protein>
<sequence length="262" mass="29706">MKNKFGKESRLYIRAKVSDGKTCLQDSYFTAPFKIAKPFYEGHGGFMNLMVMSASAGVMEGDNYRIEVELDKGARVKLEGQSYQKIHRMKNGTAVQYNSFTLADGAFLDYAPNPTIPFADSAFYSNTECRMEEGSAFIYSEILAAGRVKSGEIFRFREYHSGIKIYYGGELIFLENQFLFPKVQNLEGIGFFEGFTHQASMGFFCKQISDELIDKLCVMLTAMEDVQFGLSKTKKYGFVVRILGNSSDRLESILKLIRNILY</sequence>
<keyword id="KW-0143">Chaperone</keyword>
<keyword id="KW-0963">Cytoplasm</keyword>
<keyword id="KW-0996">Nickel insertion</keyword>
<keyword id="KW-1185">Reference proteome</keyword>
<proteinExistence type="inferred from homology"/>
<evidence type="ECO:0000255" key="1">
    <source>
        <dbReference type="HAMAP-Rule" id="MF_01384"/>
    </source>
</evidence>
<reference key="1">
    <citation type="submission" date="2007-02" db="EMBL/GenBank/DDBJ databases">
        <title>Complete sequence of Clostridium thermocellum ATCC 27405.</title>
        <authorList>
            <consortium name="US DOE Joint Genome Institute"/>
            <person name="Copeland A."/>
            <person name="Lucas S."/>
            <person name="Lapidus A."/>
            <person name="Barry K."/>
            <person name="Detter J.C."/>
            <person name="Glavina del Rio T."/>
            <person name="Hammon N."/>
            <person name="Israni S."/>
            <person name="Dalin E."/>
            <person name="Tice H."/>
            <person name="Pitluck S."/>
            <person name="Chertkov O."/>
            <person name="Brettin T."/>
            <person name="Bruce D."/>
            <person name="Han C."/>
            <person name="Tapia R."/>
            <person name="Gilna P."/>
            <person name="Schmutz J."/>
            <person name="Larimer F."/>
            <person name="Land M."/>
            <person name="Hauser L."/>
            <person name="Kyrpides N."/>
            <person name="Mikhailova N."/>
            <person name="Wu J.H.D."/>
            <person name="Newcomb M."/>
            <person name="Richardson P."/>
        </authorList>
    </citation>
    <scope>NUCLEOTIDE SEQUENCE [LARGE SCALE GENOMIC DNA]</scope>
    <source>
        <strain>ATCC 27405 / DSM 1237 / JCM 9322 / NBRC 103400 / NCIMB 10682 / NRRL B-4536 / VPI 7372</strain>
    </source>
</reference>
<accession>A3DGF4</accession>
<dbReference type="EMBL" id="CP000568">
    <property type="protein sequence ID" value="ABN53033.1"/>
    <property type="molecule type" value="Genomic_DNA"/>
</dbReference>
<dbReference type="RefSeq" id="WP_003515814.1">
    <property type="nucleotide sequence ID" value="NC_009012.1"/>
</dbReference>
<dbReference type="SMR" id="A3DGF4"/>
<dbReference type="STRING" id="203119.Cthe_1812"/>
<dbReference type="GeneID" id="35805225"/>
<dbReference type="KEGG" id="cth:Cthe_1812"/>
<dbReference type="eggNOG" id="COG0829">
    <property type="taxonomic scope" value="Bacteria"/>
</dbReference>
<dbReference type="HOGENOM" id="CLU_056339_6_1_9"/>
<dbReference type="OrthoDB" id="5328682at2"/>
<dbReference type="Proteomes" id="UP000002145">
    <property type="component" value="Chromosome"/>
</dbReference>
<dbReference type="GO" id="GO:0005737">
    <property type="term" value="C:cytoplasm"/>
    <property type="evidence" value="ECO:0007669"/>
    <property type="project" value="UniProtKB-SubCell"/>
</dbReference>
<dbReference type="GO" id="GO:0016151">
    <property type="term" value="F:nickel cation binding"/>
    <property type="evidence" value="ECO:0007669"/>
    <property type="project" value="UniProtKB-UniRule"/>
</dbReference>
<dbReference type="HAMAP" id="MF_01384">
    <property type="entry name" value="UreD"/>
    <property type="match status" value="1"/>
</dbReference>
<dbReference type="InterPro" id="IPR002669">
    <property type="entry name" value="UreD"/>
</dbReference>
<dbReference type="PANTHER" id="PTHR33643">
    <property type="entry name" value="UREASE ACCESSORY PROTEIN D"/>
    <property type="match status" value="1"/>
</dbReference>
<dbReference type="PANTHER" id="PTHR33643:SF1">
    <property type="entry name" value="UREASE ACCESSORY PROTEIN D"/>
    <property type="match status" value="1"/>
</dbReference>
<dbReference type="Pfam" id="PF01774">
    <property type="entry name" value="UreD"/>
    <property type="match status" value="1"/>
</dbReference>
<name>URED_ACET2</name>
<gene>
    <name evidence="1" type="primary">ureD</name>
    <name type="ordered locus">Cthe_1812</name>
</gene>
<organism>
    <name type="scientific">Acetivibrio thermocellus (strain ATCC 27405 / DSM 1237 / JCM 9322 / NBRC 103400 / NCIMB 10682 / NRRL B-4536 / VPI 7372)</name>
    <name type="common">Clostridium thermocellum</name>
    <dbReference type="NCBI Taxonomy" id="203119"/>
    <lineage>
        <taxon>Bacteria</taxon>
        <taxon>Bacillati</taxon>
        <taxon>Bacillota</taxon>
        <taxon>Clostridia</taxon>
        <taxon>Eubacteriales</taxon>
        <taxon>Oscillospiraceae</taxon>
        <taxon>Acetivibrio</taxon>
    </lineage>
</organism>